<dbReference type="EMBL" id="BC063217">
    <property type="protein sequence ID" value="AAH63217.1"/>
    <property type="molecule type" value="mRNA"/>
</dbReference>
<dbReference type="RefSeq" id="NP_989228.1">
    <property type="nucleotide sequence ID" value="NM_203897.1"/>
</dbReference>
<dbReference type="RefSeq" id="XP_012819903.1">
    <property type="nucleotide sequence ID" value="XM_012964449.3"/>
</dbReference>
<dbReference type="RefSeq" id="XP_012819905.1">
    <property type="nucleotide sequence ID" value="XM_012964451.3"/>
</dbReference>
<dbReference type="RefSeq" id="XP_012819906.1">
    <property type="nucleotide sequence ID" value="XM_012964452.3"/>
</dbReference>
<dbReference type="SMR" id="Q6P4W8"/>
<dbReference type="FunCoup" id="Q6P4W8">
    <property type="interactions" value="2441"/>
</dbReference>
<dbReference type="STRING" id="8364.ENSXETP00000025105"/>
<dbReference type="PaxDb" id="8364-ENSXETP00000028696"/>
<dbReference type="GeneID" id="394836"/>
<dbReference type="KEGG" id="xtr:394836"/>
<dbReference type="AGR" id="Xenbase:XB-GENE-974898"/>
<dbReference type="CTD" id="9319"/>
<dbReference type="Xenbase" id="XB-GENE-974898">
    <property type="gene designation" value="trip13"/>
</dbReference>
<dbReference type="eggNOG" id="KOG0744">
    <property type="taxonomic scope" value="Eukaryota"/>
</dbReference>
<dbReference type="HOGENOM" id="CLU_028208_0_1_1"/>
<dbReference type="InParanoid" id="Q6P4W8"/>
<dbReference type="OrthoDB" id="10042665at2759"/>
<dbReference type="TreeFam" id="TF313507"/>
<dbReference type="Proteomes" id="UP000008143">
    <property type="component" value="Chromosome 6"/>
</dbReference>
<dbReference type="GO" id="GO:0005524">
    <property type="term" value="F:ATP binding"/>
    <property type="evidence" value="ECO:0007669"/>
    <property type="project" value="UniProtKB-KW"/>
</dbReference>
<dbReference type="GO" id="GO:0016887">
    <property type="term" value="F:ATP hydrolysis activity"/>
    <property type="evidence" value="ECO:0007669"/>
    <property type="project" value="InterPro"/>
</dbReference>
<dbReference type="GO" id="GO:0006302">
    <property type="term" value="P:double-strand break repair"/>
    <property type="evidence" value="ECO:0000250"/>
    <property type="project" value="UniProtKB"/>
</dbReference>
<dbReference type="GO" id="GO:0048477">
    <property type="term" value="P:oogenesis"/>
    <property type="evidence" value="ECO:0000250"/>
    <property type="project" value="UniProtKB"/>
</dbReference>
<dbReference type="GO" id="GO:0007131">
    <property type="term" value="P:reciprocal meiotic recombination"/>
    <property type="evidence" value="ECO:0000250"/>
    <property type="project" value="UniProtKB"/>
</dbReference>
<dbReference type="GO" id="GO:0007283">
    <property type="term" value="P:spermatogenesis"/>
    <property type="evidence" value="ECO:0000250"/>
    <property type="project" value="UniProtKB"/>
</dbReference>
<dbReference type="GO" id="GO:0007130">
    <property type="term" value="P:synaptonemal complex assembly"/>
    <property type="evidence" value="ECO:0000250"/>
    <property type="project" value="UniProtKB"/>
</dbReference>
<dbReference type="CDD" id="cd19508">
    <property type="entry name" value="RecA-like_Pch2-like"/>
    <property type="match status" value="1"/>
</dbReference>
<dbReference type="FunFam" id="3.40.50.300:FF:000662">
    <property type="entry name" value="Pachytene checkpoint protein 2 homolog"/>
    <property type="match status" value="1"/>
</dbReference>
<dbReference type="Gene3D" id="3.40.50.300">
    <property type="entry name" value="P-loop containing nucleotide triphosphate hydrolases"/>
    <property type="match status" value="1"/>
</dbReference>
<dbReference type="InterPro" id="IPR003593">
    <property type="entry name" value="AAA+_ATPase"/>
</dbReference>
<dbReference type="InterPro" id="IPR003959">
    <property type="entry name" value="ATPase_AAA_core"/>
</dbReference>
<dbReference type="InterPro" id="IPR003960">
    <property type="entry name" value="ATPase_AAA_CS"/>
</dbReference>
<dbReference type="InterPro" id="IPR001270">
    <property type="entry name" value="ClpA/B"/>
</dbReference>
<dbReference type="InterPro" id="IPR027417">
    <property type="entry name" value="P-loop_NTPase"/>
</dbReference>
<dbReference type="InterPro" id="IPR044539">
    <property type="entry name" value="Pch2-like"/>
</dbReference>
<dbReference type="PANTHER" id="PTHR45991">
    <property type="entry name" value="PACHYTENE CHECKPOINT PROTEIN 2"/>
    <property type="match status" value="1"/>
</dbReference>
<dbReference type="PANTHER" id="PTHR45991:SF1">
    <property type="entry name" value="PACHYTENE CHECKPOINT PROTEIN 2 HOMOLOG"/>
    <property type="match status" value="1"/>
</dbReference>
<dbReference type="Pfam" id="PF00004">
    <property type="entry name" value="AAA"/>
    <property type="match status" value="1"/>
</dbReference>
<dbReference type="Pfam" id="PF23242">
    <property type="entry name" value="AAA_lid_TRIP13_C"/>
    <property type="match status" value="1"/>
</dbReference>
<dbReference type="Pfam" id="PF23563">
    <property type="entry name" value="TRIP13_N"/>
    <property type="match status" value="1"/>
</dbReference>
<dbReference type="PRINTS" id="PR00300">
    <property type="entry name" value="CLPPROTEASEA"/>
</dbReference>
<dbReference type="SMART" id="SM00382">
    <property type="entry name" value="AAA"/>
    <property type="match status" value="1"/>
</dbReference>
<dbReference type="SUPFAM" id="SSF52540">
    <property type="entry name" value="P-loop containing nucleoside triphosphate hydrolases"/>
    <property type="match status" value="1"/>
</dbReference>
<dbReference type="PROSITE" id="PS00674">
    <property type="entry name" value="AAA"/>
    <property type="match status" value="1"/>
</dbReference>
<keyword id="KW-0067">ATP-binding</keyword>
<keyword id="KW-0221">Differentiation</keyword>
<keyword id="KW-0469">Meiosis</keyword>
<keyword id="KW-0547">Nucleotide-binding</keyword>
<keyword id="KW-0896">Oogenesis</keyword>
<keyword id="KW-1185">Reference proteome</keyword>
<keyword id="KW-0744">Spermatogenesis</keyword>
<protein>
    <recommendedName>
        <fullName>Pachytene checkpoint protein 2 homolog</fullName>
    </recommendedName>
    <alternativeName>
        <fullName>Thyroid hormone receptor interactor 13 homolog</fullName>
    </alternativeName>
    <alternativeName>
        <fullName>Thyroid receptor-interacting protein 13 homolog</fullName>
        <shortName>TR-interacting protein 13 homolog</shortName>
        <shortName>TRIP-13 homolog</shortName>
    </alternativeName>
</protein>
<proteinExistence type="evidence at transcript level"/>
<name>PCH2_XENTR</name>
<accession>Q6P4W8</accession>
<feature type="chain" id="PRO_0000410925" description="Pachytene checkpoint protein 2 homolog">
    <location>
        <begin position="1"/>
        <end position="432"/>
    </location>
</feature>
<feature type="binding site" evidence="2">
    <location>
        <begin position="179"/>
        <end position="186"/>
    </location>
    <ligand>
        <name>ATP</name>
        <dbReference type="ChEBI" id="CHEBI:30616"/>
    </ligand>
</feature>
<organism>
    <name type="scientific">Xenopus tropicalis</name>
    <name type="common">Western clawed frog</name>
    <name type="synonym">Silurana tropicalis</name>
    <dbReference type="NCBI Taxonomy" id="8364"/>
    <lineage>
        <taxon>Eukaryota</taxon>
        <taxon>Metazoa</taxon>
        <taxon>Chordata</taxon>
        <taxon>Craniata</taxon>
        <taxon>Vertebrata</taxon>
        <taxon>Euteleostomi</taxon>
        <taxon>Amphibia</taxon>
        <taxon>Batrachia</taxon>
        <taxon>Anura</taxon>
        <taxon>Pipoidea</taxon>
        <taxon>Pipidae</taxon>
        <taxon>Xenopodinae</taxon>
        <taxon>Xenopus</taxon>
        <taxon>Silurana</taxon>
    </lineage>
</organism>
<comment type="function">
    <text evidence="1">Plays a key role in chromosome recombination and chromosome structure development during meiosis. Required at early steps in meiotic recombination that leads to non-crossovers pathways. Also needed for efficient completion of homologous synapsis by influencing crossover distribution along the chromosomes affecting both crossovers and non-crossovers pathways (By similarity).</text>
</comment>
<comment type="similarity">
    <text evidence="3">Belongs to the AAA ATPase family. PCH2 subfamily.</text>
</comment>
<sequence length="432" mass="49243">MDEVAVDLKQALPNVYNNLQVHVDVHQKSNSPATSQDIQSHVMQLLNRHCVVFGDYSWTEFDDSFLMKNIHSISIADTELKLKDRQPIDLSKCKVLIHIFQLNEDGPCVESLEEENEDLVAANHWLLPAADFHGLWDSLIYDSEIKSRLLDYIETAMLFSDKNVDSNLISWNRVVLLHGPPGTGKTSLCKALAQKLTIRLSYRYRYGQLVEINSHSLFSKWFSESGKLVTKMFQKIHELINDKEALVFVLIDEVESLTAARKASRAGTEPSDAIRVVNAVLTQIDHIKRYPNVVILSTSNLTEKIDVAFTDRADIKQYIGPPSPAAIFKIYLSCIEELMKCQIIYPKQQLLTLRDLEIIGFLENNISKLSLQLNEISRKSEGLSGRVLRKLPFLAHALYLQSPTVTIERFLWALSLAVDEQFQERKNFSENI</sequence>
<reference key="1">
    <citation type="submission" date="2003-12" db="EMBL/GenBank/DDBJ databases">
        <authorList>
            <consortium name="NIH - Xenopus Gene Collection (XGC) project"/>
        </authorList>
    </citation>
    <scope>NUCLEOTIDE SEQUENCE [LARGE SCALE MRNA]</scope>
    <source>
        <tissue>Embryo</tissue>
    </source>
</reference>
<gene>
    <name type="primary">trip13</name>
    <name type="synonym">pch2</name>
</gene>
<evidence type="ECO:0000250" key="1">
    <source>
        <dbReference type="UniProtKB" id="Q3UA06"/>
    </source>
</evidence>
<evidence type="ECO:0000255" key="2"/>
<evidence type="ECO:0000305" key="3"/>